<sequence>MAERPLDVIHKSLDKDVLVILKKGFEFRGKLIGYDIHLNVVLANAELLQDGEVVKKYGKIVIRGDNVLAISPTEEG</sequence>
<keyword id="KW-1185">Reference proteome</keyword>
<keyword id="KW-0687">Ribonucleoprotein</keyword>
<organism>
    <name type="scientific">Pyrococcus furiosus (strain ATCC 43587 / DSM 3638 / JCM 8422 / Vc1)</name>
    <dbReference type="NCBI Taxonomy" id="186497"/>
    <lineage>
        <taxon>Archaea</taxon>
        <taxon>Methanobacteriati</taxon>
        <taxon>Methanobacteriota</taxon>
        <taxon>Thermococci</taxon>
        <taxon>Thermococcales</taxon>
        <taxon>Thermococcaceae</taxon>
        <taxon>Pyrococcus</taxon>
    </lineage>
</organism>
<dbReference type="EMBL" id="AE009950">
    <property type="protein sequence ID" value="AAL81666.1"/>
    <property type="molecule type" value="Genomic_DNA"/>
</dbReference>
<dbReference type="RefSeq" id="WP_011012689.1">
    <property type="nucleotide sequence ID" value="NZ_CP023154.1"/>
</dbReference>
<dbReference type="SMR" id="Q8U0P4"/>
<dbReference type="STRING" id="186497.PF1542"/>
<dbReference type="PaxDb" id="186497-PF1542"/>
<dbReference type="KEGG" id="pfu:PF1542"/>
<dbReference type="PATRIC" id="fig|186497.12.peg.1608"/>
<dbReference type="eggNOG" id="arCOG00998">
    <property type="taxonomic scope" value="Archaea"/>
</dbReference>
<dbReference type="HOGENOM" id="CLU_076902_11_1_2"/>
<dbReference type="OrthoDB" id="371816at2157"/>
<dbReference type="PhylomeDB" id="Q8U0P4"/>
<dbReference type="Proteomes" id="UP000001013">
    <property type="component" value="Chromosome"/>
</dbReference>
<dbReference type="GO" id="GO:1990904">
    <property type="term" value="C:ribonucleoprotein complex"/>
    <property type="evidence" value="ECO:0007669"/>
    <property type="project" value="UniProtKB-KW"/>
</dbReference>
<dbReference type="GO" id="GO:0120114">
    <property type="term" value="C:Sm-like protein family complex"/>
    <property type="evidence" value="ECO:0007669"/>
    <property type="project" value="UniProtKB-ARBA"/>
</dbReference>
<dbReference type="GO" id="GO:0003723">
    <property type="term" value="F:RNA binding"/>
    <property type="evidence" value="ECO:0007669"/>
    <property type="project" value="InterPro"/>
</dbReference>
<dbReference type="GO" id="GO:0000398">
    <property type="term" value="P:mRNA splicing, via spliceosome"/>
    <property type="evidence" value="ECO:0007669"/>
    <property type="project" value="InterPro"/>
</dbReference>
<dbReference type="CDD" id="cd01731">
    <property type="entry name" value="archaeal_Sm1"/>
    <property type="match status" value="1"/>
</dbReference>
<dbReference type="Gene3D" id="2.30.30.100">
    <property type="match status" value="1"/>
</dbReference>
<dbReference type="HAMAP" id="MF_00257">
    <property type="entry name" value="Lsm_RuxX"/>
    <property type="match status" value="1"/>
</dbReference>
<dbReference type="InterPro" id="IPR016487">
    <property type="entry name" value="Lsm6/sSmF"/>
</dbReference>
<dbReference type="InterPro" id="IPR010920">
    <property type="entry name" value="LSM_dom_sf"/>
</dbReference>
<dbReference type="InterPro" id="IPR047575">
    <property type="entry name" value="Sm"/>
</dbReference>
<dbReference type="InterPro" id="IPR001163">
    <property type="entry name" value="Sm_dom_euk/arc"/>
</dbReference>
<dbReference type="InterPro" id="IPR022901">
    <property type="entry name" value="snRNP_Sm-like_arc"/>
</dbReference>
<dbReference type="NCBIfam" id="NF001963">
    <property type="entry name" value="PRK00737.1"/>
    <property type="match status" value="1"/>
</dbReference>
<dbReference type="PANTHER" id="PTHR11021:SF0">
    <property type="entry name" value="SMALL NUCLEAR RIBONUCLEOPROTEIN F"/>
    <property type="match status" value="1"/>
</dbReference>
<dbReference type="PANTHER" id="PTHR11021">
    <property type="entry name" value="SMALL NUCLEAR RIBONUCLEOPROTEIN F SNRNP-F"/>
    <property type="match status" value="1"/>
</dbReference>
<dbReference type="Pfam" id="PF01423">
    <property type="entry name" value="LSM"/>
    <property type="match status" value="1"/>
</dbReference>
<dbReference type="SMART" id="SM00651">
    <property type="entry name" value="Sm"/>
    <property type="match status" value="1"/>
</dbReference>
<dbReference type="SUPFAM" id="SSF50182">
    <property type="entry name" value="Sm-like ribonucleoproteins"/>
    <property type="match status" value="1"/>
</dbReference>
<dbReference type="PROSITE" id="PS52002">
    <property type="entry name" value="SM"/>
    <property type="match status" value="1"/>
</dbReference>
<reference key="1">
    <citation type="journal article" date="1999" name="Genetics">
        <title>Divergence of the hyperthermophilic archaea Pyrococcus furiosus and P. horikoshii inferred from complete genomic sequences.</title>
        <authorList>
            <person name="Maeder D.L."/>
            <person name="Weiss R.B."/>
            <person name="Dunn D.M."/>
            <person name="Cherry J.L."/>
            <person name="Gonzalez J.M."/>
            <person name="DiRuggiero J."/>
            <person name="Robb F.T."/>
        </authorList>
    </citation>
    <scope>NUCLEOTIDE SEQUENCE [LARGE SCALE GENOMIC DNA]</scope>
    <source>
        <strain>ATCC 43587 / DSM 3638 / JCM 8422 / Vc1</strain>
    </source>
</reference>
<gene>
    <name type="ordered locus">PF1542</name>
</gene>
<evidence type="ECO:0000255" key="1">
    <source>
        <dbReference type="HAMAP-Rule" id="MF_00257"/>
    </source>
</evidence>
<evidence type="ECO:0000255" key="2">
    <source>
        <dbReference type="PROSITE-ProRule" id="PRU01346"/>
    </source>
</evidence>
<protein>
    <recommendedName>
        <fullName evidence="1">Putative snRNP Sm-like protein</fullName>
    </recommendedName>
</protein>
<comment type="similarity">
    <text evidence="1">Belongs to the snRNP Sm proteins family.</text>
</comment>
<accession>Q8U0P4</accession>
<proteinExistence type="inferred from homology"/>
<name>RUXX_PYRFU</name>
<feature type="chain" id="PRO_0000125597" description="Putative snRNP Sm-like protein">
    <location>
        <begin position="1"/>
        <end position="76"/>
    </location>
</feature>
<feature type="domain" description="Sm" evidence="2">
    <location>
        <begin position="4"/>
        <end position="76"/>
    </location>
</feature>